<comment type="function">
    <text evidence="1">Required for rescue of stalled ribosomes mediated by trans-translation. Binds to transfer-messenger RNA (tmRNA), required for stable association of tmRNA with ribosomes. tmRNA and SmpB together mimic tRNA shape, replacing the anticodon stem-loop with SmpB. tmRNA is encoded by the ssrA gene; the 2 termini fold to resemble tRNA(Ala) and it encodes a 'tag peptide', a short internal open reading frame. During trans-translation Ala-aminoacylated tmRNA acts like a tRNA, entering the A-site of stalled ribosomes, displacing the stalled mRNA. The ribosome then switches to translate the ORF on the tmRNA; the nascent peptide is terminated with the 'tag peptide' encoded by the tmRNA and targeted for degradation. The ribosome is freed to recommence translation, which seems to be the essential function of trans-translation.</text>
</comment>
<comment type="subcellular location">
    <subcellularLocation>
        <location evidence="1">Cytoplasm</location>
    </subcellularLocation>
    <text evidence="1">The tmRNA-SmpB complex associates with stalled 70S ribosomes.</text>
</comment>
<comment type="similarity">
    <text evidence="1">Belongs to the SmpB family.</text>
</comment>
<gene>
    <name evidence="1" type="primary">smpB</name>
    <name type="ordered locus">Teth39_1355</name>
</gene>
<keyword id="KW-0963">Cytoplasm</keyword>
<keyword id="KW-1185">Reference proteome</keyword>
<keyword id="KW-0694">RNA-binding</keyword>
<feature type="chain" id="PRO_1000197632" description="SsrA-binding protein">
    <location>
        <begin position="1"/>
        <end position="156"/>
    </location>
</feature>
<accession>B0KA44</accession>
<name>SSRP_THEP3</name>
<dbReference type="EMBL" id="CP000924">
    <property type="protein sequence ID" value="ABY95007.1"/>
    <property type="molecule type" value="Genomic_DNA"/>
</dbReference>
<dbReference type="RefSeq" id="WP_012269405.1">
    <property type="nucleotide sequence ID" value="NC_010321.1"/>
</dbReference>
<dbReference type="SMR" id="B0KA44"/>
<dbReference type="STRING" id="340099.Teth39_1355"/>
<dbReference type="KEGG" id="tpd:Teth39_1355"/>
<dbReference type="eggNOG" id="COG0691">
    <property type="taxonomic scope" value="Bacteria"/>
</dbReference>
<dbReference type="HOGENOM" id="CLU_108953_0_0_9"/>
<dbReference type="Proteomes" id="UP000002156">
    <property type="component" value="Chromosome"/>
</dbReference>
<dbReference type="GO" id="GO:0005829">
    <property type="term" value="C:cytosol"/>
    <property type="evidence" value="ECO:0007669"/>
    <property type="project" value="TreeGrafter"/>
</dbReference>
<dbReference type="GO" id="GO:0003723">
    <property type="term" value="F:RNA binding"/>
    <property type="evidence" value="ECO:0007669"/>
    <property type="project" value="UniProtKB-UniRule"/>
</dbReference>
<dbReference type="GO" id="GO:0070929">
    <property type="term" value="P:trans-translation"/>
    <property type="evidence" value="ECO:0007669"/>
    <property type="project" value="UniProtKB-UniRule"/>
</dbReference>
<dbReference type="CDD" id="cd09294">
    <property type="entry name" value="SmpB"/>
    <property type="match status" value="1"/>
</dbReference>
<dbReference type="Gene3D" id="2.40.280.10">
    <property type="match status" value="1"/>
</dbReference>
<dbReference type="HAMAP" id="MF_00023">
    <property type="entry name" value="SmpB"/>
    <property type="match status" value="1"/>
</dbReference>
<dbReference type="InterPro" id="IPR023620">
    <property type="entry name" value="SmpB"/>
</dbReference>
<dbReference type="InterPro" id="IPR000037">
    <property type="entry name" value="SsrA-bd_prot"/>
</dbReference>
<dbReference type="InterPro" id="IPR020081">
    <property type="entry name" value="SsrA-bd_prot_CS"/>
</dbReference>
<dbReference type="NCBIfam" id="NF003843">
    <property type="entry name" value="PRK05422.1"/>
    <property type="match status" value="1"/>
</dbReference>
<dbReference type="NCBIfam" id="TIGR00086">
    <property type="entry name" value="smpB"/>
    <property type="match status" value="1"/>
</dbReference>
<dbReference type="PANTHER" id="PTHR30308:SF2">
    <property type="entry name" value="SSRA-BINDING PROTEIN"/>
    <property type="match status" value="1"/>
</dbReference>
<dbReference type="PANTHER" id="PTHR30308">
    <property type="entry name" value="TMRNA-BINDING COMPONENT OF TRANS-TRANSLATION TAGGING COMPLEX"/>
    <property type="match status" value="1"/>
</dbReference>
<dbReference type="Pfam" id="PF01668">
    <property type="entry name" value="SmpB"/>
    <property type="match status" value="1"/>
</dbReference>
<dbReference type="SUPFAM" id="SSF74982">
    <property type="entry name" value="Small protein B (SmpB)"/>
    <property type="match status" value="1"/>
</dbReference>
<dbReference type="PROSITE" id="PS01317">
    <property type="entry name" value="SSRP"/>
    <property type="match status" value="1"/>
</dbReference>
<reference key="1">
    <citation type="submission" date="2008-01" db="EMBL/GenBank/DDBJ databases">
        <title>Complete sequence of Thermoanaerobacter pseudethanolicus 39E.</title>
        <authorList>
            <person name="Copeland A."/>
            <person name="Lucas S."/>
            <person name="Lapidus A."/>
            <person name="Barry K."/>
            <person name="Glavina del Rio T."/>
            <person name="Dalin E."/>
            <person name="Tice H."/>
            <person name="Pitluck S."/>
            <person name="Bruce D."/>
            <person name="Goodwin L."/>
            <person name="Saunders E."/>
            <person name="Brettin T."/>
            <person name="Detter J.C."/>
            <person name="Han C."/>
            <person name="Schmutz J."/>
            <person name="Larimer F."/>
            <person name="Land M."/>
            <person name="Hauser L."/>
            <person name="Kyrpides N."/>
            <person name="Lykidis A."/>
            <person name="Hemme C."/>
            <person name="Fields M.W."/>
            <person name="He Z."/>
            <person name="Zhou J."/>
            <person name="Richardson P."/>
        </authorList>
    </citation>
    <scope>NUCLEOTIDE SEQUENCE [LARGE SCALE GENOMIC DNA]</scope>
    <source>
        <strain>ATCC 33223 / DSM 2355 / 39E</strain>
    </source>
</reference>
<sequence>MAKEEIKIIAQNKKAYHDYFIEETYEAGIVLSGTEVKSIRMGKVNLKDSFARVENNEVYLYNMHISPYEKGNIFNKDPLRTRKLLLNRHEINKLIGYVTRKGYTLIPTKLYLKRGLVKVELAVARGKKLYDKREDIARRDAKSELEKHFKEKQLGI</sequence>
<organism>
    <name type="scientific">Thermoanaerobacter pseudethanolicus (strain ATCC 33223 / 39E)</name>
    <name type="common">Clostridium thermohydrosulfuricum</name>
    <dbReference type="NCBI Taxonomy" id="340099"/>
    <lineage>
        <taxon>Bacteria</taxon>
        <taxon>Bacillati</taxon>
        <taxon>Bacillota</taxon>
        <taxon>Clostridia</taxon>
        <taxon>Thermoanaerobacterales</taxon>
        <taxon>Thermoanaerobacteraceae</taxon>
        <taxon>Thermoanaerobacter</taxon>
    </lineage>
</organism>
<proteinExistence type="inferred from homology"/>
<protein>
    <recommendedName>
        <fullName evidence="1">SsrA-binding protein</fullName>
    </recommendedName>
    <alternativeName>
        <fullName evidence="1">Small protein B</fullName>
    </alternativeName>
</protein>
<evidence type="ECO:0000255" key="1">
    <source>
        <dbReference type="HAMAP-Rule" id="MF_00023"/>
    </source>
</evidence>